<sequence length="239" mass="28438">MDTVGLFSAEVEHLFIEWIKKHIKKGDLTLFERFFKADPWIVNRCDRSKITVFMWICIYGRLDFLRFLFKQESYPGEIISHYRRDKDGNSVWHYLAEKKNHLLLEEVLEYFGKIGIKVCFRNFNGITPVMKAAMRGRTLSVLSLIKYGANPNQKDYLKGFNTWDWAVFTGHADLVKSLNKDYQKPLFMHFPLYKLDVFHRRHKKKPKIIITSCEDNVYEKLPEQNPNFLCVKKLNKYGK</sequence>
<gene>
    <name type="primary">A238L</name>
    <name type="ordered locus">Ken-051</name>
</gene>
<proteinExistence type="inferred from homology"/>
<dbReference type="EMBL" id="AY261360">
    <property type="status" value="NOT_ANNOTATED_CDS"/>
    <property type="molecule type" value="Genomic_DNA"/>
</dbReference>
<dbReference type="SMR" id="P0C965"/>
<dbReference type="Proteomes" id="UP000000861">
    <property type="component" value="Segment"/>
</dbReference>
<dbReference type="GO" id="GO:0030430">
    <property type="term" value="C:host cell cytoplasm"/>
    <property type="evidence" value="ECO:0007669"/>
    <property type="project" value="UniProtKB-SubCell"/>
</dbReference>
<dbReference type="GO" id="GO:0042025">
    <property type="term" value="C:host cell nucleus"/>
    <property type="evidence" value="ECO:0007669"/>
    <property type="project" value="UniProtKB-SubCell"/>
</dbReference>
<dbReference type="GO" id="GO:0085034">
    <property type="term" value="P:symbiont-mediated suppression of host NF-kappaB cascade"/>
    <property type="evidence" value="ECO:0007669"/>
    <property type="project" value="UniProtKB-KW"/>
</dbReference>
<dbReference type="FunFam" id="1.25.40.20:FF:001205">
    <property type="entry name" value="Predicted protein"/>
    <property type="match status" value="1"/>
</dbReference>
<dbReference type="Gene3D" id="1.25.40.20">
    <property type="entry name" value="Ankyrin repeat-containing domain"/>
    <property type="match status" value="1"/>
</dbReference>
<dbReference type="InterPro" id="IPR002110">
    <property type="entry name" value="Ankyrin_rpt"/>
</dbReference>
<dbReference type="InterPro" id="IPR036770">
    <property type="entry name" value="Ankyrin_rpt-contain_sf"/>
</dbReference>
<dbReference type="Pfam" id="PF00023">
    <property type="entry name" value="Ank"/>
    <property type="match status" value="1"/>
</dbReference>
<dbReference type="SMART" id="SM00248">
    <property type="entry name" value="ANK"/>
    <property type="match status" value="4"/>
</dbReference>
<dbReference type="SUPFAM" id="SSF48403">
    <property type="entry name" value="Ankyrin repeat"/>
    <property type="match status" value="1"/>
</dbReference>
<dbReference type="PROSITE" id="PS50297">
    <property type="entry name" value="ANK_REP_REGION"/>
    <property type="match status" value="1"/>
</dbReference>
<dbReference type="PROSITE" id="PS50088">
    <property type="entry name" value="ANK_REPEAT"/>
    <property type="match status" value="1"/>
</dbReference>
<evidence type="ECO:0000250" key="1">
    <source>
        <dbReference type="UniProtKB" id="O36972"/>
    </source>
</evidence>
<evidence type="ECO:0000250" key="2">
    <source>
        <dbReference type="UniProtKB" id="Q76U48"/>
    </source>
</evidence>
<evidence type="ECO:0000305" key="3"/>
<comment type="function">
    <text evidence="1 2">IkB-like protein that inhibits the binding of NF-kappa-B to DNA, thereby downregulating pro-inflammatory cytokine production (By similarity). Forms a heterodimer with the NF-kappa-B subunit RELA/p65 and prevents the activation of the NF-kappa-B transcription factor (By similarity). Inhibits calcineurin function, which is required for the induction of nuclear factor of activated T cells (NFAT)-dependent immune response genes. Prevents the binding of substrates to calcineurin without affecting the phosphatase activity (By similarity). Does not contain the serine residues that are phosphorylated by host IkB kinase and thus is not degraded following stimulation of the NFkB pathway (By similarity).</text>
</comment>
<comment type="subunit">
    <text evidence="1 2">Interacts with host PPIA. Interacts with host PPP3CA/Calcineurin (By similarity). Interacts with host RELA/p65; interaction of the 32 kDa form with host RELA results in the formation of a stable complex with NF-kappa-B (By similarity). Interacts with host PPP3R1 (By similarity). Interacts with host EP300; this interaction inhibits the association of host EP300 with host RELA, JUN and NFATC2 (By similarity).</text>
</comment>
<comment type="subcellular location">
    <subcellularLocation>
        <location evidence="2">Host nucleus</location>
    </subcellularLocation>
    <subcellularLocation>
        <location evidence="2">Host cytoplasm</location>
    </subcellularLocation>
    <text evidence="2">Binding to host PPP3CA/Calcineurin may mask the second nuclear localization signal thereby contributing to the cytoplasmic retention of A238L.</text>
</comment>
<comment type="induction">
    <text evidence="3">Expressed in the early phase of the viral replicative cycle.</text>
</comment>
<comment type="domain">
    <text evidence="1">The C-terminal region contains the docking motifs PxIxITxC and FLCV, which are required and sufficient for binding to host calcineurin.</text>
</comment>
<comment type="PTM">
    <text evidence="2">The protein exists in a 28 kDa and a 32 kDa form, probably due to post-translational modifications which are neither phosphorylation, nor sumoylation.</text>
</comment>
<comment type="similarity">
    <text evidence="3">Belongs to the asfivirus A238L family.</text>
</comment>
<feature type="chain" id="PRO_0000372836" description="IkB-like protein">
    <location>
        <begin position="1"/>
        <end position="239"/>
    </location>
</feature>
<feature type="repeat" description="ANK 1">
    <location>
        <begin position="48"/>
        <end position="80"/>
    </location>
</feature>
<feature type="repeat" description="ANK 2">
    <location>
        <begin position="87"/>
        <end position="118"/>
    </location>
</feature>
<feature type="repeat" description="ANK 3">
    <location>
        <begin position="124"/>
        <end position="153"/>
    </location>
</feature>
<feature type="repeat" description="ANK 4">
    <location>
        <begin position="158"/>
        <end position="187"/>
    </location>
</feature>
<feature type="short sequence motif" description="Nuclear localization signal" evidence="2">
    <location>
        <begin position="81"/>
        <end position="87"/>
    </location>
</feature>
<feature type="short sequence motif" description="Nuclear localization signal" evidence="2">
    <location>
        <begin position="203"/>
        <end position="214"/>
    </location>
</feature>
<feature type="short sequence motif" description="PxIxITxC motif; Interaction with host PPP3CA" evidence="1">
    <location>
        <begin position="206"/>
        <end position="213"/>
    </location>
</feature>
<feature type="short sequence motif" description="FLCV motif" evidence="1">
    <location>
        <begin position="228"/>
        <end position="231"/>
    </location>
</feature>
<name>IKBL_ASFK5</name>
<reference key="1">
    <citation type="submission" date="2003-03" db="EMBL/GenBank/DDBJ databases">
        <title>African swine fever virus genomes.</title>
        <authorList>
            <person name="Kutish G.F."/>
            <person name="Rock D.L."/>
        </authorList>
    </citation>
    <scope>NUCLEOTIDE SEQUENCE [LARGE SCALE GENOMIC DNA]</scope>
</reference>
<organismHost>
    <name type="scientific">Ornithodoros</name>
    <name type="common">relapsing fever ticks</name>
    <dbReference type="NCBI Taxonomy" id="6937"/>
</organismHost>
<organismHost>
    <name type="scientific">Phacochoerus aethiopicus</name>
    <name type="common">Warthog</name>
    <dbReference type="NCBI Taxonomy" id="85517"/>
</organismHost>
<organismHost>
    <name type="scientific">Phacochoerus africanus</name>
    <name type="common">Warthog</name>
    <dbReference type="NCBI Taxonomy" id="41426"/>
</organismHost>
<organismHost>
    <name type="scientific">Potamochoerus larvatus</name>
    <name type="common">Bushpig</name>
    <dbReference type="NCBI Taxonomy" id="273792"/>
</organismHost>
<organismHost>
    <name type="scientific">Sus scrofa</name>
    <name type="common">Pig</name>
    <dbReference type="NCBI Taxonomy" id="9823"/>
</organismHost>
<keyword id="KW-0040">ANK repeat</keyword>
<keyword id="KW-1035">Host cytoplasm</keyword>
<keyword id="KW-1048">Host nucleus</keyword>
<keyword id="KW-0945">Host-virus interaction</keyword>
<keyword id="KW-1100">Inhibition of host NF-kappa-B by virus</keyword>
<keyword id="KW-0677">Repeat</keyword>
<keyword id="KW-0832">Ubl conjugation</keyword>
<organism>
    <name type="scientific">African swine fever virus (isolate Pig/Kenya/KEN-50/1950)</name>
    <name type="common">ASFV</name>
    <dbReference type="NCBI Taxonomy" id="561445"/>
    <lineage>
        <taxon>Viruses</taxon>
        <taxon>Varidnaviria</taxon>
        <taxon>Bamfordvirae</taxon>
        <taxon>Nucleocytoviricota</taxon>
        <taxon>Pokkesviricetes</taxon>
        <taxon>Asfuvirales</taxon>
        <taxon>Asfarviridae</taxon>
        <taxon>Asfivirus</taxon>
        <taxon>African swine fever virus</taxon>
    </lineage>
</organism>
<protein>
    <recommendedName>
        <fullName>IkB-like protein</fullName>
    </recommendedName>
    <alternativeName>
        <fullName>Ankyrin repeat domain-containing protein A238L</fullName>
    </alternativeName>
    <alternativeName>
        <fullName>p28</fullName>
    </alternativeName>
</protein>
<accession>P0C965</accession>